<evidence type="ECO:0000255" key="1">
    <source>
        <dbReference type="PROSITE-ProRule" id="PRU00639"/>
    </source>
</evidence>
<evidence type="ECO:0000269" key="2">
    <source>
    </source>
</evidence>
<evidence type="ECO:0000269" key="3">
    <source>
    </source>
</evidence>
<evidence type="ECO:0000303" key="4">
    <source>
    </source>
</evidence>
<evidence type="ECO:0000305" key="5"/>
<proteinExistence type="evidence at protein level"/>
<dbReference type="SMR" id="C0HLX7"/>
<dbReference type="GO" id="GO:0005534">
    <property type="term" value="F:galactose binding"/>
    <property type="evidence" value="ECO:0000314"/>
    <property type="project" value="UniProtKB"/>
</dbReference>
<dbReference type="GO" id="GO:0042803">
    <property type="term" value="F:protein homodimerization activity"/>
    <property type="evidence" value="ECO:0000314"/>
    <property type="project" value="UniProtKB"/>
</dbReference>
<dbReference type="GO" id="GO:0098630">
    <property type="term" value="P:aggregation of unicellular organisms"/>
    <property type="evidence" value="ECO:0000314"/>
    <property type="project" value="UniProtKB"/>
</dbReference>
<dbReference type="GO" id="GO:0050829">
    <property type="term" value="P:defense response to Gram-negative bacterium"/>
    <property type="evidence" value="ECO:0000314"/>
    <property type="project" value="UniProtKB"/>
</dbReference>
<dbReference type="GO" id="GO:0050830">
    <property type="term" value="P:defense response to Gram-positive bacterium"/>
    <property type="evidence" value="ECO:0000314"/>
    <property type="project" value="UniProtKB"/>
</dbReference>
<dbReference type="GO" id="GO:0042832">
    <property type="term" value="P:defense response to protozoan"/>
    <property type="evidence" value="ECO:0000314"/>
    <property type="project" value="UniProtKB"/>
</dbReference>
<dbReference type="Gene3D" id="2.60.120.200">
    <property type="match status" value="1"/>
</dbReference>
<dbReference type="InterPro" id="IPR013320">
    <property type="entry name" value="ConA-like_dom_sf"/>
</dbReference>
<dbReference type="InterPro" id="IPR001079">
    <property type="entry name" value="Galectin_CRD"/>
</dbReference>
<dbReference type="Pfam" id="PF00337">
    <property type="entry name" value="Gal-bind_lectin"/>
    <property type="match status" value="1"/>
</dbReference>
<dbReference type="SMART" id="SM00276">
    <property type="entry name" value="GLECT"/>
    <property type="match status" value="1"/>
</dbReference>
<dbReference type="SUPFAM" id="SSF49899">
    <property type="entry name" value="Concanavalin A-like lectins/glucanases"/>
    <property type="match status" value="1"/>
</dbReference>
<dbReference type="PROSITE" id="PS51304">
    <property type="entry name" value="GALECTIN"/>
    <property type="match status" value="1"/>
</dbReference>
<accession>C0HLX7</accession>
<organism evidence="4">
    <name type="scientific">Chondrilla caribensis</name>
    <name type="common">Chicken liver sponge</name>
    <dbReference type="NCBI Taxonomy" id="1336846"/>
    <lineage>
        <taxon>Eukaryota</taxon>
        <taxon>Metazoa</taxon>
        <taxon>Porifera</taxon>
        <taxon>Demospongiae</taxon>
        <taxon>Verongimorpha</taxon>
        <taxon>Chondrillida</taxon>
        <taxon>Chondrillidae</taxon>
        <taxon>Chondrilla</taxon>
    </lineage>
</organism>
<name>GLEC_CHOCI</name>
<reference evidence="5" key="1">
    <citation type="journal article" date="2021" name="Biochim. Biophys. Acta">
        <title>Structural characterization of a galectin isolated from the marine sponge Chondrilla caribensis with leishmanicidal potential.</title>
        <authorList>
            <person name="Sousa A.R.O."/>
            <person name="Andrade F.R.N."/>
            <person name="Chaves R.P."/>
            <person name="Sousa B.L."/>
            <person name="Lima D.B."/>
            <person name="Souza R.O.D.S."/>
            <person name="da Silva C.G.L."/>
            <person name="Teixeira C.S."/>
            <person name="Sampaio A.H."/>
            <person name="Nagano C.S."/>
            <person name="Carneiro R.F."/>
        </authorList>
    </citation>
    <scope>PROTEIN SEQUENCE</scope>
    <scope>IDENTIFICATION BY MASS SPECTROMETRY</scope>
    <scope>FUNCTION</scope>
    <scope>ACTIVITY REGULATION</scope>
    <scope>BIOTECHNOLOGY</scope>
</reference>
<reference evidence="5" key="2">
    <citation type="journal article" date="2018" name="Int. J. Biol. Macromol.">
        <title>Antibacterial activity of a new lectin isolated from the marine sponge Chondrilla caribensis.</title>
        <authorList>
            <person name="Marques D.N."/>
            <person name="Almeida A.S."/>
            <person name="Sousa A.R.O."/>
            <person name="Pereira R."/>
            <person name="Andrade A.L."/>
            <person name="Chaves R.P."/>
            <person name="Carneiro R.F."/>
            <person name="Vasconcelos M.A."/>
            <person name="Nascimento-Neto L.G.D."/>
            <person name="Pinheiro U."/>
            <person name="Videira P.A."/>
            <person name="Teixeira E.H."/>
            <person name="Nagano C.S."/>
            <person name="Sampaio A.H."/>
        </authorList>
    </citation>
    <scope>IDENTIFICATION BY MASS SPECTROMETRY</scope>
    <scope>FUNCTION</scope>
    <scope>SUBUNIT</scope>
    <scope>ACTIVITY REGULATION</scope>
    <scope>BIOPHYSICOCHEMICAL PROPERTIES</scope>
</reference>
<protein>
    <recommendedName>
        <fullName evidence="4">Galactose-binding lectin</fullName>
        <shortName evidence="4">CCL</shortName>
    </recommendedName>
</protein>
<comment type="function">
    <text evidence="2 3">Galactose-binding lectin (PubMed:29175164, PubMed:34508835). Displays antibacterial and hemagglutinin activity (PubMed:29175164, PubMed:34508835). Inhibits the growth of L.infantum promastigotes by damaging their membrane integrity and inducing cell apoptosis via the production of reactive oxygen species (ROS) (PubMed:34508835). Inhibition of L.infantum promastigotes appears to increase with time (MIC=1.2 uM/ml after 24 hours, MIC=0.9 uM/ml after 48 hours and MIC=0.6 uM/ml after 72 hours) (PubMed:34508835). Agglutinates Gram-negative and Gram-positive bacteria including E.coli, S.aureus and S.epidermidis, and inhibits biofilm formation by S.aureus and S.epidermidis (PubMed:29175164). Displays hemagglutination activity towards all types of human erythrocytes (O, A and B) and rabbit erythrocytes (PubMed:29175164).</text>
</comment>
<comment type="activity regulation">
    <text evidence="2 3">Cytotoxic activity against L.infantum promastigotes is completely inhibited by D-galactose (PubMed:34508835). Inhibition activity against biofilm formation by S.aureus and S.epidermidis is inhibited by alpha-lactose (PubMed:29175164). Hemagglutination activity is inhibited by alpha-lactose (MIC=100 mM), beta-lactose (MIC=100 mM), lactulose (MIC=100 mM), bovine submaxillary mucin (BSM) (MIC=32 ug/ml), fetuin (MIC=16 ug/ml), porcine stomach mucin (PSM) type 2 (MIC=8 ug/ml) and PSM type 3 (MIC=8 ug/ml) (PubMed:29175164).</text>
</comment>
<comment type="biophysicochemical properties">
    <phDependence>
        <text evidence="2">Optimum pH for hemagglutination activity is 9.</text>
    </phDependence>
    <temperatureDependence>
        <text evidence="2">Thermostable at high temperatures.</text>
    </temperatureDependence>
</comment>
<comment type="subunit">
    <text evidence="2">Homotetramer.</text>
</comment>
<comment type="mass spectrometry" mass="15443.0" method="Electrospray" evidence="3"/>
<comment type="mass spectrometry" mass="15445.0" method="Electrospray" evidence="2"/>
<comment type="biotechnology">
    <text evidence="3">May have potential use in the development of new treatments against pathogens that cause Leishmaniasis.</text>
</comment>
<feature type="chain" id="PRO_0000456394" description="Galactose-binding lectin">
    <location>
        <begin position="1"/>
        <end position="142"/>
    </location>
</feature>
<feature type="domain" description="Galectin" evidence="1">
    <location>
        <begin position="1"/>
        <end position="141"/>
    </location>
</feature>
<feature type="unsure residue" description="L or I" evidence="3">
    <location>
        <position position="27"/>
    </location>
</feature>
<feature type="unsure residue" description="I or L" evidence="3">
    <location>
        <position position="31"/>
    </location>
</feature>
<feature type="unsure residue" description="L or I" evidence="3">
    <location>
        <position position="115"/>
    </location>
</feature>
<feature type="unsure residue" description="L or I" evidence="3">
    <location>
        <position position="138"/>
    </location>
</feature>
<feature type="unsure residue" description="L or I" evidence="3">
    <location>
        <position position="139"/>
    </location>
</feature>
<feature type="unsure residue" description="L or I" evidence="3">
    <location>
        <position position="140"/>
    </location>
</feature>
<feature type="unsure residue" description="L or I" evidence="3">
    <location>
        <position position="141"/>
    </location>
</feature>
<sequence length="142" mass="15443">TYAEVESFGVGQSATAVYTAPGDGRDLNITIDADGGYVIHMDYRFDWGGNPSTGKPWEDILILNSKPAQTWGPQQHVNNFYFTPGTHVTLGDKSNDGHFAIIADGIQVATYDHRLPVNSVKEVKFSTTAGSGTDIWDLLLLP</sequence>
<keyword id="KW-0044">Antibiotic</keyword>
<keyword id="KW-0929">Antimicrobial</keyword>
<keyword id="KW-0903">Direct protein sequencing</keyword>
<keyword id="KW-0348">Hemagglutinin</keyword>
<keyword id="KW-0430">Lectin</keyword>